<name>LFTR_BORBR</name>
<reference key="1">
    <citation type="journal article" date="2003" name="Nat. Genet.">
        <title>Comparative analysis of the genome sequences of Bordetella pertussis, Bordetella parapertussis and Bordetella bronchiseptica.</title>
        <authorList>
            <person name="Parkhill J."/>
            <person name="Sebaihia M."/>
            <person name="Preston A."/>
            <person name="Murphy L.D."/>
            <person name="Thomson N.R."/>
            <person name="Harris D.E."/>
            <person name="Holden M.T.G."/>
            <person name="Churcher C.M."/>
            <person name="Bentley S.D."/>
            <person name="Mungall K.L."/>
            <person name="Cerdeno-Tarraga A.-M."/>
            <person name="Temple L."/>
            <person name="James K.D."/>
            <person name="Harris B."/>
            <person name="Quail M.A."/>
            <person name="Achtman M."/>
            <person name="Atkin R."/>
            <person name="Baker S."/>
            <person name="Basham D."/>
            <person name="Bason N."/>
            <person name="Cherevach I."/>
            <person name="Chillingworth T."/>
            <person name="Collins M."/>
            <person name="Cronin A."/>
            <person name="Davis P."/>
            <person name="Doggett J."/>
            <person name="Feltwell T."/>
            <person name="Goble A."/>
            <person name="Hamlin N."/>
            <person name="Hauser H."/>
            <person name="Holroyd S."/>
            <person name="Jagels K."/>
            <person name="Leather S."/>
            <person name="Moule S."/>
            <person name="Norberczak H."/>
            <person name="O'Neil S."/>
            <person name="Ormond D."/>
            <person name="Price C."/>
            <person name="Rabbinowitsch E."/>
            <person name="Rutter S."/>
            <person name="Sanders M."/>
            <person name="Saunders D."/>
            <person name="Seeger K."/>
            <person name="Sharp S."/>
            <person name="Simmonds M."/>
            <person name="Skelton J."/>
            <person name="Squares R."/>
            <person name="Squares S."/>
            <person name="Stevens K."/>
            <person name="Unwin L."/>
            <person name="Whitehead S."/>
            <person name="Barrell B.G."/>
            <person name="Maskell D.J."/>
        </authorList>
    </citation>
    <scope>NUCLEOTIDE SEQUENCE [LARGE SCALE GENOMIC DNA]</scope>
    <source>
        <strain>ATCC BAA-588 / NCTC 13252 / RB50</strain>
    </source>
</reference>
<evidence type="ECO:0000255" key="1">
    <source>
        <dbReference type="HAMAP-Rule" id="MF_00688"/>
    </source>
</evidence>
<organism>
    <name type="scientific">Bordetella bronchiseptica (strain ATCC BAA-588 / NCTC 13252 / RB50)</name>
    <name type="common">Alcaligenes bronchisepticus</name>
    <dbReference type="NCBI Taxonomy" id="257310"/>
    <lineage>
        <taxon>Bacteria</taxon>
        <taxon>Pseudomonadati</taxon>
        <taxon>Pseudomonadota</taxon>
        <taxon>Betaproteobacteria</taxon>
        <taxon>Burkholderiales</taxon>
        <taxon>Alcaligenaceae</taxon>
        <taxon>Bordetella</taxon>
    </lineage>
</organism>
<keyword id="KW-0012">Acyltransferase</keyword>
<keyword id="KW-0963">Cytoplasm</keyword>
<keyword id="KW-0808">Transferase</keyword>
<accession>Q7WGE6</accession>
<comment type="function">
    <text evidence="1">Functions in the N-end rule pathway of protein degradation where it conjugates Leu, Phe and, less efficiently, Met from aminoacyl-tRNAs to the N-termini of proteins containing an N-terminal arginine or lysine.</text>
</comment>
<comment type="catalytic activity">
    <reaction evidence="1">
        <text>N-terminal L-lysyl-[protein] + L-leucyl-tRNA(Leu) = N-terminal L-leucyl-L-lysyl-[protein] + tRNA(Leu) + H(+)</text>
        <dbReference type="Rhea" id="RHEA:12340"/>
        <dbReference type="Rhea" id="RHEA-COMP:9613"/>
        <dbReference type="Rhea" id="RHEA-COMP:9622"/>
        <dbReference type="Rhea" id="RHEA-COMP:12670"/>
        <dbReference type="Rhea" id="RHEA-COMP:12671"/>
        <dbReference type="ChEBI" id="CHEBI:15378"/>
        <dbReference type="ChEBI" id="CHEBI:65249"/>
        <dbReference type="ChEBI" id="CHEBI:78442"/>
        <dbReference type="ChEBI" id="CHEBI:78494"/>
        <dbReference type="ChEBI" id="CHEBI:133043"/>
        <dbReference type="EC" id="2.3.2.6"/>
    </reaction>
</comment>
<comment type="catalytic activity">
    <reaction evidence="1">
        <text>N-terminal L-arginyl-[protein] + L-leucyl-tRNA(Leu) = N-terminal L-leucyl-L-arginyl-[protein] + tRNA(Leu) + H(+)</text>
        <dbReference type="Rhea" id="RHEA:50416"/>
        <dbReference type="Rhea" id="RHEA-COMP:9613"/>
        <dbReference type="Rhea" id="RHEA-COMP:9622"/>
        <dbReference type="Rhea" id="RHEA-COMP:12672"/>
        <dbReference type="Rhea" id="RHEA-COMP:12673"/>
        <dbReference type="ChEBI" id="CHEBI:15378"/>
        <dbReference type="ChEBI" id="CHEBI:64719"/>
        <dbReference type="ChEBI" id="CHEBI:78442"/>
        <dbReference type="ChEBI" id="CHEBI:78494"/>
        <dbReference type="ChEBI" id="CHEBI:133044"/>
        <dbReference type="EC" id="2.3.2.6"/>
    </reaction>
</comment>
<comment type="catalytic activity">
    <reaction evidence="1">
        <text>L-phenylalanyl-tRNA(Phe) + an N-terminal L-alpha-aminoacyl-[protein] = an N-terminal L-phenylalanyl-L-alpha-aminoacyl-[protein] + tRNA(Phe)</text>
        <dbReference type="Rhea" id="RHEA:43632"/>
        <dbReference type="Rhea" id="RHEA-COMP:9668"/>
        <dbReference type="Rhea" id="RHEA-COMP:9699"/>
        <dbReference type="Rhea" id="RHEA-COMP:10636"/>
        <dbReference type="Rhea" id="RHEA-COMP:10637"/>
        <dbReference type="ChEBI" id="CHEBI:78442"/>
        <dbReference type="ChEBI" id="CHEBI:78531"/>
        <dbReference type="ChEBI" id="CHEBI:78597"/>
        <dbReference type="ChEBI" id="CHEBI:83561"/>
        <dbReference type="EC" id="2.3.2.6"/>
    </reaction>
</comment>
<comment type="subcellular location">
    <subcellularLocation>
        <location evidence="1">Cytoplasm</location>
    </subcellularLocation>
</comment>
<comment type="similarity">
    <text evidence="1">Belongs to the L/F-transferase family.</text>
</comment>
<proteinExistence type="inferred from homology"/>
<gene>
    <name evidence="1" type="primary">aat</name>
    <name type="ordered locus">BB3973</name>
</gene>
<feature type="chain" id="PRO_0000207205" description="Leucyl/phenylalanyl-tRNA--protein transferase">
    <location>
        <begin position="1"/>
        <end position="254"/>
    </location>
</feature>
<dbReference type="EC" id="2.3.2.6" evidence="1"/>
<dbReference type="EMBL" id="BX640449">
    <property type="protein sequence ID" value="CAE34336.1"/>
    <property type="molecule type" value="Genomic_DNA"/>
</dbReference>
<dbReference type="RefSeq" id="WP_003814164.1">
    <property type="nucleotide sequence ID" value="NC_002927.3"/>
</dbReference>
<dbReference type="SMR" id="Q7WGE6"/>
<dbReference type="GeneID" id="56477526"/>
<dbReference type="KEGG" id="bbr:BB3973"/>
<dbReference type="eggNOG" id="COG2360">
    <property type="taxonomic scope" value="Bacteria"/>
</dbReference>
<dbReference type="HOGENOM" id="CLU_075045_0_0_4"/>
<dbReference type="Proteomes" id="UP000001027">
    <property type="component" value="Chromosome"/>
</dbReference>
<dbReference type="GO" id="GO:0005737">
    <property type="term" value="C:cytoplasm"/>
    <property type="evidence" value="ECO:0007669"/>
    <property type="project" value="UniProtKB-SubCell"/>
</dbReference>
<dbReference type="GO" id="GO:0008914">
    <property type="term" value="F:leucyl-tRNA--protein transferase activity"/>
    <property type="evidence" value="ECO:0007669"/>
    <property type="project" value="UniProtKB-UniRule"/>
</dbReference>
<dbReference type="GO" id="GO:0030163">
    <property type="term" value="P:protein catabolic process"/>
    <property type="evidence" value="ECO:0007669"/>
    <property type="project" value="UniProtKB-UniRule"/>
</dbReference>
<dbReference type="FunFam" id="3.30.70.3550:FF:000001">
    <property type="entry name" value="Leucyl/phenylalanyl-tRNA--protein transferase"/>
    <property type="match status" value="1"/>
</dbReference>
<dbReference type="Gene3D" id="3.40.630.70">
    <property type="entry name" value="Leucyl/phenylalanyl-tRNA-protein transferase, C-terminal domain"/>
    <property type="match status" value="1"/>
</dbReference>
<dbReference type="Gene3D" id="3.30.70.3550">
    <property type="entry name" value="Leucyl/phenylalanyl-tRNA-protein transferase, N-terminal domain"/>
    <property type="match status" value="1"/>
</dbReference>
<dbReference type="HAMAP" id="MF_00688">
    <property type="entry name" value="Leu_Phe_trans"/>
    <property type="match status" value="1"/>
</dbReference>
<dbReference type="InterPro" id="IPR016181">
    <property type="entry name" value="Acyl_CoA_acyltransferase"/>
</dbReference>
<dbReference type="InterPro" id="IPR004616">
    <property type="entry name" value="Leu/Phe-tRNA_Trfase"/>
</dbReference>
<dbReference type="InterPro" id="IPR042203">
    <property type="entry name" value="Leu/Phe-tRNA_Trfase_C"/>
</dbReference>
<dbReference type="InterPro" id="IPR042221">
    <property type="entry name" value="Leu/Phe-tRNA_Trfase_N"/>
</dbReference>
<dbReference type="NCBIfam" id="TIGR00667">
    <property type="entry name" value="aat"/>
    <property type="match status" value="1"/>
</dbReference>
<dbReference type="PANTHER" id="PTHR30098">
    <property type="entry name" value="LEUCYL/PHENYLALANYL-TRNA--PROTEIN TRANSFERASE"/>
    <property type="match status" value="1"/>
</dbReference>
<dbReference type="PANTHER" id="PTHR30098:SF2">
    <property type="entry name" value="LEUCYL_PHENYLALANYL-TRNA--PROTEIN TRANSFERASE"/>
    <property type="match status" value="1"/>
</dbReference>
<dbReference type="Pfam" id="PF03588">
    <property type="entry name" value="Leu_Phe_trans"/>
    <property type="match status" value="1"/>
</dbReference>
<dbReference type="SUPFAM" id="SSF55729">
    <property type="entry name" value="Acyl-CoA N-acyltransferases (Nat)"/>
    <property type="match status" value="1"/>
</dbReference>
<sequence length="254" mass="28097">MKLPWLAADTPFPPVEQALRDPDGLLAAGADLSPERLAQAYAHGIFPWYAEGEPILWWSPDPRMVLACADFAPSHSLRKRLRALARTEHDPAARLQVRVDTAFARVLHECAAPRHGQPGTWISPAVQQAYRSWHAAGFVHSIETWIDGELAGGLYGVSLGRMFYGESMFARATDASKIALAHLVAFLRRHQVAWIDCQQQTGHLARLGARPVPRARFIEHIAHAVAQPRLPWRSGRLDSAGMLHPLPPANGVMM</sequence>
<protein>
    <recommendedName>
        <fullName evidence="1">Leucyl/phenylalanyl-tRNA--protein transferase</fullName>
        <ecNumber evidence="1">2.3.2.6</ecNumber>
    </recommendedName>
    <alternativeName>
        <fullName evidence="1">L/F-transferase</fullName>
    </alternativeName>
    <alternativeName>
        <fullName evidence="1">Leucyltransferase</fullName>
    </alternativeName>
    <alternativeName>
        <fullName evidence="1">Phenyalanyltransferase</fullName>
    </alternativeName>
</protein>